<gene>
    <name type="primary">MSH4</name>
    <name type="ordered locus">At4g17380</name>
    <name type="ORF">dl4725w</name>
    <name type="ORF">FCAALL.423</name>
</gene>
<evidence type="ECO:0000255" key="1"/>
<evidence type="ECO:0000269" key="2">
    <source>
    </source>
</evidence>
<evidence type="ECO:0000269" key="3">
    <source>
    </source>
</evidence>
<evidence type="ECO:0000269" key="4">
    <source>
    </source>
</evidence>
<evidence type="ECO:0000269" key="5">
    <source>
    </source>
</evidence>
<evidence type="ECO:0000269" key="6">
    <source>
    </source>
</evidence>
<evidence type="ECO:0000305" key="7"/>
<sequence>MEDDGGERSSFVAGLIENRAKEVGMAAFDLRSASLHLSQYIETSSSYQNTKTLLRFYDPSVIIVPPNKLAADGMVGVSELVDRCYSTVRKVVFARGCFDDTKGAVLIQNLAAEEPLALGLDTYYKQHYLSLAAAAATIKWIEAEKGVIVTNHSLTVTFNGSFDHMNIDATSVENLELIDPFHNALLGTSNKKRSLFQMFKTTKTAGGTRLLRANLLQPLKDIETINTRLDCLDELMSNEQLFFGLSQVLRKFPKETDRVLCHFCFKPKKVTEAVIGFENTRKSQNMISSIILLKTALDALPILAKVLKDAKCFLLANVYKSVCENDRYASIRKKIGEVIDDDVLHARVPFVARTQQCFALKAGIDGFLDIARRTFCDTSEAIHNLASKYREEFNLPNLKLPFNNRQGFFFRIPQKEVQGKLPNKFTQVVKHGKNIHCSSLELASLNVRNKSAAGECFIRTETCLEALMDAIREDISALTLLAEVLCLLDMIVNSFAHTISTKPVDRYSRPELTDSGPLAIDAGRHPILESIHNDFVSNSIFMSEATNMLVVMGPNMSGKSTYLQQVCLVVILAQIGCYVPARFATIRVVDRIFTRMGTMDNLESNSSTFMTEMRETAFIMQNVTNRSLIVMDELGRATSSSDGLAMAWSCCEYLLSLKAYTVFATHMDSLAELATIYPNVKVLHFYVDIRDNRLDFKFQLRDGTLHVPHYGLLLAEVAGLPSTVIDTARIITKRITDKENKRIELNCGKHHEIHRIYRVAQRLICLKYSRQTEDSIRQALQNLNESFTEERL</sequence>
<name>MSH4_ARATH</name>
<proteinExistence type="evidence at transcript level"/>
<organism>
    <name type="scientific">Arabidopsis thaliana</name>
    <name type="common">Mouse-ear cress</name>
    <dbReference type="NCBI Taxonomy" id="3702"/>
    <lineage>
        <taxon>Eukaryota</taxon>
        <taxon>Viridiplantae</taxon>
        <taxon>Streptophyta</taxon>
        <taxon>Embryophyta</taxon>
        <taxon>Tracheophyta</taxon>
        <taxon>Spermatophyta</taxon>
        <taxon>Magnoliopsida</taxon>
        <taxon>eudicotyledons</taxon>
        <taxon>Gunneridae</taxon>
        <taxon>Pentapetalae</taxon>
        <taxon>rosids</taxon>
        <taxon>malvids</taxon>
        <taxon>Brassicales</taxon>
        <taxon>Brassicaceae</taxon>
        <taxon>Camelineae</taxon>
        <taxon>Arabidopsis</taxon>
    </lineage>
</organism>
<dbReference type="EMBL" id="AY646927">
    <property type="protein sequence ID" value="AAT70180.1"/>
    <property type="molecule type" value="mRNA"/>
</dbReference>
<dbReference type="EMBL" id="Z97343">
    <property type="protein sequence ID" value="CAB10519.1"/>
    <property type="status" value="ALT_SEQ"/>
    <property type="molecule type" value="Genomic_DNA"/>
</dbReference>
<dbReference type="EMBL" id="AL161546">
    <property type="protein sequence ID" value="CAB78741.1"/>
    <property type="status" value="ALT_SEQ"/>
    <property type="molecule type" value="Genomic_DNA"/>
</dbReference>
<dbReference type="EMBL" id="CP002687">
    <property type="protein sequence ID" value="AEE83882.1"/>
    <property type="molecule type" value="Genomic_DNA"/>
</dbReference>
<dbReference type="PIR" id="B71443">
    <property type="entry name" value="B71443"/>
</dbReference>
<dbReference type="RefSeq" id="NP_193469.2">
    <property type="nucleotide sequence ID" value="NM_117842.3"/>
</dbReference>
<dbReference type="SMR" id="F4JP48"/>
<dbReference type="FunCoup" id="F4JP48">
    <property type="interactions" value="825"/>
</dbReference>
<dbReference type="IntAct" id="F4JP48">
    <property type="interactions" value="1"/>
</dbReference>
<dbReference type="STRING" id="3702.F4JP48"/>
<dbReference type="PaxDb" id="3702-AT4G17380.1"/>
<dbReference type="EnsemblPlants" id="AT4G17380.1">
    <property type="protein sequence ID" value="AT4G17380.1"/>
    <property type="gene ID" value="AT4G17380"/>
</dbReference>
<dbReference type="GeneID" id="827450"/>
<dbReference type="Gramene" id="AT4G17380.1">
    <property type="protein sequence ID" value="AT4G17380.1"/>
    <property type="gene ID" value="AT4G17380"/>
</dbReference>
<dbReference type="KEGG" id="ath:AT4G17380"/>
<dbReference type="Araport" id="AT4G17380"/>
<dbReference type="TAIR" id="AT4G17380">
    <property type="gene designation" value="MSH4"/>
</dbReference>
<dbReference type="eggNOG" id="KOG0220">
    <property type="taxonomic scope" value="Eukaryota"/>
</dbReference>
<dbReference type="HOGENOM" id="CLU_002472_7_3_1"/>
<dbReference type="InParanoid" id="F4JP48"/>
<dbReference type="OMA" id="KMTMLYK"/>
<dbReference type="PRO" id="PR:F4JP48"/>
<dbReference type="Proteomes" id="UP000006548">
    <property type="component" value="Chromosome 4"/>
</dbReference>
<dbReference type="ExpressionAtlas" id="F4JP48">
    <property type="expression patterns" value="baseline and differential"/>
</dbReference>
<dbReference type="GO" id="GO:0000794">
    <property type="term" value="C:condensed nuclear chromosome"/>
    <property type="evidence" value="ECO:0000314"/>
    <property type="project" value="TAIR"/>
</dbReference>
<dbReference type="GO" id="GO:0043073">
    <property type="term" value="C:germ cell nucleus"/>
    <property type="evidence" value="ECO:0000314"/>
    <property type="project" value="UniProtKB"/>
</dbReference>
<dbReference type="GO" id="GO:0009506">
    <property type="term" value="C:plasmodesma"/>
    <property type="evidence" value="ECO:0007005"/>
    <property type="project" value="TAIR"/>
</dbReference>
<dbReference type="GO" id="GO:0005524">
    <property type="term" value="F:ATP binding"/>
    <property type="evidence" value="ECO:0007669"/>
    <property type="project" value="UniProtKB-KW"/>
</dbReference>
<dbReference type="GO" id="GO:0140664">
    <property type="term" value="F:ATP-dependent DNA damage sensor activity"/>
    <property type="evidence" value="ECO:0007669"/>
    <property type="project" value="InterPro"/>
</dbReference>
<dbReference type="GO" id="GO:0030983">
    <property type="term" value="F:mismatched DNA binding"/>
    <property type="evidence" value="ECO:0007669"/>
    <property type="project" value="InterPro"/>
</dbReference>
<dbReference type="GO" id="GO:0007129">
    <property type="term" value="P:homologous chromosome pairing at meiosis"/>
    <property type="evidence" value="ECO:0000315"/>
    <property type="project" value="TAIR"/>
</dbReference>
<dbReference type="GO" id="GO:0045143">
    <property type="term" value="P:homologous chromosome segregation"/>
    <property type="evidence" value="ECO:0000315"/>
    <property type="project" value="UniProtKB"/>
</dbReference>
<dbReference type="GO" id="GO:0010777">
    <property type="term" value="P:meiotic mismatch repair involved in reciprocal meiotic recombination"/>
    <property type="evidence" value="ECO:0000315"/>
    <property type="project" value="UniProtKB"/>
</dbReference>
<dbReference type="FunFam" id="1.10.1420.10:FF:000011">
    <property type="entry name" value="DNA mismatch repair protein MSH4"/>
    <property type="match status" value="1"/>
</dbReference>
<dbReference type="FunFam" id="1.10.1420.10:FF:000012">
    <property type="entry name" value="DNA mismatch repair protein MSH4"/>
    <property type="match status" value="1"/>
</dbReference>
<dbReference type="FunFam" id="3.30.420.110:FF:000024">
    <property type="entry name" value="DNA mismatch repair protein MSH4"/>
    <property type="match status" value="1"/>
</dbReference>
<dbReference type="FunFam" id="3.40.50.300:FF:001249">
    <property type="entry name" value="DNA mismatch repair protein MSH4"/>
    <property type="match status" value="1"/>
</dbReference>
<dbReference type="Gene3D" id="1.10.1420.10">
    <property type="match status" value="2"/>
</dbReference>
<dbReference type="Gene3D" id="3.30.420.110">
    <property type="entry name" value="MutS, connector domain"/>
    <property type="match status" value="1"/>
</dbReference>
<dbReference type="Gene3D" id="3.40.50.300">
    <property type="entry name" value="P-loop containing nucleotide triphosphate hydrolases"/>
    <property type="match status" value="1"/>
</dbReference>
<dbReference type="InterPro" id="IPR011184">
    <property type="entry name" value="DNA_mismatch_repair_Msh2"/>
</dbReference>
<dbReference type="InterPro" id="IPR000432">
    <property type="entry name" value="DNA_mismatch_repair_MutS_C"/>
</dbReference>
<dbReference type="InterPro" id="IPR007861">
    <property type="entry name" value="DNA_mismatch_repair_MutS_clamp"/>
</dbReference>
<dbReference type="InterPro" id="IPR007696">
    <property type="entry name" value="DNA_mismatch_repair_MutS_core"/>
</dbReference>
<dbReference type="InterPro" id="IPR036187">
    <property type="entry name" value="DNA_mismatch_repair_MutS_sf"/>
</dbReference>
<dbReference type="InterPro" id="IPR045076">
    <property type="entry name" value="MutS"/>
</dbReference>
<dbReference type="InterPro" id="IPR036678">
    <property type="entry name" value="MutS_con_dom_sf"/>
</dbReference>
<dbReference type="InterPro" id="IPR027417">
    <property type="entry name" value="P-loop_NTPase"/>
</dbReference>
<dbReference type="PANTHER" id="PTHR11361">
    <property type="entry name" value="DNA MISMATCH REPAIR PROTEIN MUTS FAMILY MEMBER"/>
    <property type="match status" value="1"/>
</dbReference>
<dbReference type="PANTHER" id="PTHR11361:SF21">
    <property type="entry name" value="MUTS PROTEIN HOMOLOG 4"/>
    <property type="match status" value="1"/>
</dbReference>
<dbReference type="Pfam" id="PF05192">
    <property type="entry name" value="MutS_III"/>
    <property type="match status" value="1"/>
</dbReference>
<dbReference type="Pfam" id="PF05190">
    <property type="entry name" value="MutS_IV"/>
    <property type="match status" value="1"/>
</dbReference>
<dbReference type="Pfam" id="PF00488">
    <property type="entry name" value="MutS_V"/>
    <property type="match status" value="1"/>
</dbReference>
<dbReference type="PIRSF" id="PIRSF005813">
    <property type="entry name" value="MSH2"/>
    <property type="match status" value="1"/>
</dbReference>
<dbReference type="SMART" id="SM00534">
    <property type="entry name" value="MUTSac"/>
    <property type="match status" value="1"/>
</dbReference>
<dbReference type="SMART" id="SM00533">
    <property type="entry name" value="MUTSd"/>
    <property type="match status" value="1"/>
</dbReference>
<dbReference type="SUPFAM" id="SSF48334">
    <property type="entry name" value="DNA repair protein MutS, domain III"/>
    <property type="match status" value="1"/>
</dbReference>
<dbReference type="SUPFAM" id="SSF52540">
    <property type="entry name" value="P-loop containing nucleoside triphosphate hydrolases"/>
    <property type="match status" value="1"/>
</dbReference>
<protein>
    <recommendedName>
        <fullName>DNA mismatch repair protein MSH4</fullName>
        <shortName>AtMSH4</shortName>
    </recommendedName>
    <alternativeName>
        <fullName>MutS protein homolog 4</fullName>
    </alternativeName>
</protein>
<feature type="chain" id="PRO_0000418367" description="DNA mismatch repair protein MSH4">
    <location>
        <begin position="1"/>
        <end position="792"/>
    </location>
</feature>
<feature type="binding site" evidence="1">
    <location>
        <begin position="553"/>
        <end position="560"/>
    </location>
    <ligand>
        <name>ATP</name>
        <dbReference type="ChEBI" id="CHEBI:30616"/>
    </ligand>
</feature>
<feature type="sequence conflict" description="In Ref. 1; AAT70180." evidence="7" ref="1">
    <original>K</original>
    <variation>E</variation>
    <location>
        <position position="254"/>
    </location>
</feature>
<accession>F4JP48</accession>
<accession>O23581</accession>
<accession>Q6DTM5</accession>
<keyword id="KW-0067">ATP-binding</keyword>
<keyword id="KW-0238">DNA-binding</keyword>
<keyword id="KW-0469">Meiosis</keyword>
<keyword id="KW-0547">Nucleotide-binding</keyword>
<keyword id="KW-0539">Nucleus</keyword>
<keyword id="KW-1185">Reference proteome</keyword>
<reference key="1">
    <citation type="journal article" date="2004" name="Genes Dev.">
        <title>The Arabidopsis MutS homolog AtMSH4 functions at an early step in recombination: evidence for two classes of recombination in Arabidopsis.</title>
        <authorList>
            <person name="Higgins J.D."/>
            <person name="Armstrong S.J."/>
            <person name="Franklin F.C.H."/>
            <person name="Jones G.H."/>
        </authorList>
    </citation>
    <scope>NUCLEOTIDE SEQUENCE [MRNA]</scope>
    <scope>FUNCTION</scope>
    <scope>SUBCELLULAR LOCATION</scope>
    <scope>TISSUE SPECIFICITY</scope>
    <scope>DISRUPTION PHENOTYPE</scope>
</reference>
<reference key="2">
    <citation type="journal article" date="1998" name="Nature">
        <title>Analysis of 1.9 Mb of contiguous sequence from chromosome 4 of Arabidopsis thaliana.</title>
        <authorList>
            <person name="Bevan M."/>
            <person name="Bancroft I."/>
            <person name="Bent E."/>
            <person name="Love K."/>
            <person name="Goodman H.M."/>
            <person name="Dean C."/>
            <person name="Bergkamp R."/>
            <person name="Dirkse W."/>
            <person name="van Staveren M."/>
            <person name="Stiekema W."/>
            <person name="Drost L."/>
            <person name="Ridley P."/>
            <person name="Hudson S.-A."/>
            <person name="Patel K."/>
            <person name="Murphy G."/>
            <person name="Piffanelli P."/>
            <person name="Wedler H."/>
            <person name="Wedler E."/>
            <person name="Wambutt R."/>
            <person name="Weitzenegger T."/>
            <person name="Pohl T."/>
            <person name="Terryn N."/>
            <person name="Gielen J."/>
            <person name="Villarroel R."/>
            <person name="De Clercq R."/>
            <person name="van Montagu M."/>
            <person name="Lecharny A."/>
            <person name="Aubourg S."/>
            <person name="Gy I."/>
            <person name="Kreis M."/>
            <person name="Lao N."/>
            <person name="Kavanagh T."/>
            <person name="Hempel S."/>
            <person name="Kotter P."/>
            <person name="Entian K.-D."/>
            <person name="Rieger M."/>
            <person name="Schaefer M."/>
            <person name="Funk B."/>
            <person name="Mueller-Auer S."/>
            <person name="Silvey M."/>
            <person name="James R."/>
            <person name="Monfort A."/>
            <person name="Pons A."/>
            <person name="Puigdomenech P."/>
            <person name="Douka A."/>
            <person name="Voukelatou E."/>
            <person name="Milioni D."/>
            <person name="Hatzopoulos P."/>
            <person name="Piravandi E."/>
            <person name="Obermaier B."/>
            <person name="Hilbert H."/>
            <person name="Duesterhoeft A."/>
            <person name="Moores T."/>
            <person name="Jones J.D.G."/>
            <person name="Eneva T."/>
            <person name="Palme K."/>
            <person name="Benes V."/>
            <person name="Rechmann S."/>
            <person name="Ansorge W."/>
            <person name="Cooke R."/>
            <person name="Berger C."/>
            <person name="Delseny M."/>
            <person name="Voet M."/>
            <person name="Volckaert G."/>
            <person name="Mewes H.-W."/>
            <person name="Klosterman S."/>
            <person name="Schueller C."/>
            <person name="Chalwatzis N."/>
        </authorList>
    </citation>
    <scope>NUCLEOTIDE SEQUENCE [LARGE SCALE GENOMIC DNA]</scope>
    <source>
        <strain>cv. Columbia</strain>
    </source>
</reference>
<reference key="3">
    <citation type="journal article" date="1999" name="Nature">
        <title>Sequence and analysis of chromosome 4 of the plant Arabidopsis thaliana.</title>
        <authorList>
            <person name="Mayer K.F.X."/>
            <person name="Schueller C."/>
            <person name="Wambutt R."/>
            <person name="Murphy G."/>
            <person name="Volckaert G."/>
            <person name="Pohl T."/>
            <person name="Duesterhoeft A."/>
            <person name="Stiekema W."/>
            <person name="Entian K.-D."/>
            <person name="Terryn N."/>
            <person name="Harris B."/>
            <person name="Ansorge W."/>
            <person name="Brandt P."/>
            <person name="Grivell L.A."/>
            <person name="Rieger M."/>
            <person name="Weichselgartner M."/>
            <person name="de Simone V."/>
            <person name="Obermaier B."/>
            <person name="Mache R."/>
            <person name="Mueller M."/>
            <person name="Kreis M."/>
            <person name="Delseny M."/>
            <person name="Puigdomenech P."/>
            <person name="Watson M."/>
            <person name="Schmidtheini T."/>
            <person name="Reichert B."/>
            <person name="Portetelle D."/>
            <person name="Perez-Alonso M."/>
            <person name="Boutry M."/>
            <person name="Bancroft I."/>
            <person name="Vos P."/>
            <person name="Hoheisel J."/>
            <person name="Zimmermann W."/>
            <person name="Wedler H."/>
            <person name="Ridley P."/>
            <person name="Langham S.-A."/>
            <person name="McCullagh B."/>
            <person name="Bilham L."/>
            <person name="Robben J."/>
            <person name="van der Schueren J."/>
            <person name="Grymonprez B."/>
            <person name="Chuang Y.-J."/>
            <person name="Vandenbussche F."/>
            <person name="Braeken M."/>
            <person name="Weltjens I."/>
            <person name="Voet M."/>
            <person name="Bastiaens I."/>
            <person name="Aert R."/>
            <person name="Defoor E."/>
            <person name="Weitzenegger T."/>
            <person name="Bothe G."/>
            <person name="Ramsperger U."/>
            <person name="Hilbert H."/>
            <person name="Braun M."/>
            <person name="Holzer E."/>
            <person name="Brandt A."/>
            <person name="Peters S."/>
            <person name="van Staveren M."/>
            <person name="Dirkse W."/>
            <person name="Mooijman P."/>
            <person name="Klein Lankhorst R."/>
            <person name="Rose M."/>
            <person name="Hauf J."/>
            <person name="Koetter P."/>
            <person name="Berneiser S."/>
            <person name="Hempel S."/>
            <person name="Feldpausch M."/>
            <person name="Lamberth S."/>
            <person name="Van den Daele H."/>
            <person name="De Keyser A."/>
            <person name="Buysshaert C."/>
            <person name="Gielen J."/>
            <person name="Villarroel R."/>
            <person name="De Clercq R."/>
            <person name="van Montagu M."/>
            <person name="Rogers J."/>
            <person name="Cronin A."/>
            <person name="Quail M.A."/>
            <person name="Bray-Allen S."/>
            <person name="Clark L."/>
            <person name="Doggett J."/>
            <person name="Hall S."/>
            <person name="Kay M."/>
            <person name="Lennard N."/>
            <person name="McLay K."/>
            <person name="Mayes R."/>
            <person name="Pettett A."/>
            <person name="Rajandream M.A."/>
            <person name="Lyne M."/>
            <person name="Benes V."/>
            <person name="Rechmann S."/>
            <person name="Borkova D."/>
            <person name="Bloecker H."/>
            <person name="Scharfe M."/>
            <person name="Grimm M."/>
            <person name="Loehnert T.-H."/>
            <person name="Dose S."/>
            <person name="de Haan M."/>
            <person name="Maarse A.C."/>
            <person name="Schaefer M."/>
            <person name="Mueller-Auer S."/>
            <person name="Gabel C."/>
            <person name="Fuchs M."/>
            <person name="Fartmann B."/>
            <person name="Granderath K."/>
            <person name="Dauner D."/>
            <person name="Herzl A."/>
            <person name="Neumann S."/>
            <person name="Argiriou A."/>
            <person name="Vitale D."/>
            <person name="Liguori R."/>
            <person name="Piravandi E."/>
            <person name="Massenet O."/>
            <person name="Quigley F."/>
            <person name="Clabauld G."/>
            <person name="Muendlein A."/>
            <person name="Felber R."/>
            <person name="Schnabl S."/>
            <person name="Hiller R."/>
            <person name="Schmidt W."/>
            <person name="Lecharny A."/>
            <person name="Aubourg S."/>
            <person name="Chefdor F."/>
            <person name="Cooke R."/>
            <person name="Berger C."/>
            <person name="Monfort A."/>
            <person name="Casacuberta E."/>
            <person name="Gibbons T."/>
            <person name="Weber N."/>
            <person name="Vandenbol M."/>
            <person name="Bargues M."/>
            <person name="Terol J."/>
            <person name="Torres A."/>
            <person name="Perez-Perez A."/>
            <person name="Purnelle B."/>
            <person name="Bent E."/>
            <person name="Johnson S."/>
            <person name="Tacon D."/>
            <person name="Jesse T."/>
            <person name="Heijnen L."/>
            <person name="Schwarz S."/>
            <person name="Scholler P."/>
            <person name="Heber S."/>
            <person name="Francs P."/>
            <person name="Bielke C."/>
            <person name="Frishman D."/>
            <person name="Haase D."/>
            <person name="Lemcke K."/>
            <person name="Mewes H.-W."/>
            <person name="Stocker S."/>
            <person name="Zaccaria P."/>
            <person name="Bevan M."/>
            <person name="Wilson R.K."/>
            <person name="de la Bastide M."/>
            <person name="Habermann K."/>
            <person name="Parnell L."/>
            <person name="Dedhia N."/>
            <person name="Gnoj L."/>
            <person name="Schutz K."/>
            <person name="Huang E."/>
            <person name="Spiegel L."/>
            <person name="Sekhon M."/>
            <person name="Murray J."/>
            <person name="Sheet P."/>
            <person name="Cordes M."/>
            <person name="Abu-Threideh J."/>
            <person name="Stoneking T."/>
            <person name="Kalicki J."/>
            <person name="Graves T."/>
            <person name="Harmon G."/>
            <person name="Edwards J."/>
            <person name="Latreille P."/>
            <person name="Courtney L."/>
            <person name="Cloud J."/>
            <person name="Abbott A."/>
            <person name="Scott K."/>
            <person name="Johnson D."/>
            <person name="Minx P."/>
            <person name="Bentley D."/>
            <person name="Fulton B."/>
            <person name="Miller N."/>
            <person name="Greco T."/>
            <person name="Kemp K."/>
            <person name="Kramer J."/>
            <person name="Fulton L."/>
            <person name="Mardis E."/>
            <person name="Dante M."/>
            <person name="Pepin K."/>
            <person name="Hillier L.W."/>
            <person name="Nelson J."/>
            <person name="Spieth J."/>
            <person name="Ryan E."/>
            <person name="Andrews S."/>
            <person name="Geisel C."/>
            <person name="Layman D."/>
            <person name="Du H."/>
            <person name="Ali J."/>
            <person name="Berghoff A."/>
            <person name="Jones K."/>
            <person name="Drone K."/>
            <person name="Cotton M."/>
            <person name="Joshu C."/>
            <person name="Antonoiu B."/>
            <person name="Zidanic M."/>
            <person name="Strong C."/>
            <person name="Sun H."/>
            <person name="Lamar B."/>
            <person name="Yordan C."/>
            <person name="Ma P."/>
            <person name="Zhong J."/>
            <person name="Preston R."/>
            <person name="Vil D."/>
            <person name="Shekher M."/>
            <person name="Matero A."/>
            <person name="Shah R."/>
            <person name="Swaby I.K."/>
            <person name="O'Shaughnessy A."/>
            <person name="Rodriguez M."/>
            <person name="Hoffman J."/>
            <person name="Till S."/>
            <person name="Granat S."/>
            <person name="Shohdy N."/>
            <person name="Hasegawa A."/>
            <person name="Hameed A."/>
            <person name="Lodhi M."/>
            <person name="Johnson A."/>
            <person name="Chen E."/>
            <person name="Marra M.A."/>
            <person name="Martienssen R."/>
            <person name="McCombie W.R."/>
        </authorList>
    </citation>
    <scope>NUCLEOTIDE SEQUENCE [LARGE SCALE GENOMIC DNA]</scope>
    <source>
        <strain>cv. Columbia</strain>
    </source>
</reference>
<reference key="4">
    <citation type="journal article" date="2017" name="Plant J.">
        <title>Araport11: a complete reannotation of the Arabidopsis thaliana reference genome.</title>
        <authorList>
            <person name="Cheng C.Y."/>
            <person name="Krishnakumar V."/>
            <person name="Chan A.P."/>
            <person name="Thibaud-Nissen F."/>
            <person name="Schobel S."/>
            <person name="Town C.D."/>
        </authorList>
    </citation>
    <scope>GENOME REANNOTATION</scope>
    <source>
        <strain>cv. Columbia</strain>
    </source>
</reference>
<reference key="5">
    <citation type="journal article" date="2007" name="PLoS Genet.">
        <title>Zip4/Spo22 is required for class I CO formation but not for synapsis completion in Arabidopsis thaliana.</title>
        <authorList>
            <person name="Chelysheva L."/>
            <person name="Gendrot G."/>
            <person name="Vezon D."/>
            <person name="Doutriaux M.P."/>
            <person name="Mercier R."/>
            <person name="Grelon M."/>
        </authorList>
    </citation>
    <scope>FUNCTION</scope>
</reference>
<reference key="6">
    <citation type="journal article" date="2008" name="Plant J.">
        <title>AtMSH5 partners AtMSH4 in the class I meiotic crossover pathway in Arabidopsis thaliana, but is not required for synapsis.</title>
        <authorList>
            <person name="Higgins J.D."/>
            <person name="Vignard J."/>
            <person name="Mercier R."/>
            <person name="Pugh A.G."/>
            <person name="Franklin F.C."/>
            <person name="Jones G.H."/>
        </authorList>
    </citation>
    <scope>SUBCELLULAR LOCATION</scope>
</reference>
<reference key="7">
    <citation type="journal article" date="2009" name="EMBO J.">
        <title>Replication protein A (AtRPA1a) is required for class I crossover formation but is dispensable for meiotic DNA break repair.</title>
        <authorList>
            <person name="Osman K."/>
            <person name="Sanchez-Moran E."/>
            <person name="Mann S.C."/>
            <person name="Jones G.H."/>
            <person name="Franklin F.C."/>
        </authorList>
    </citation>
    <scope>FUNCTION</scope>
    <scope>SUBCELLULAR LOCATION</scope>
</reference>
<reference key="8">
    <citation type="journal article" date="2011" name="EMBO J.">
        <title>Retinoblastoma protein is essential for early meiotic events in Arabidopsis.</title>
        <authorList>
            <person name="Chen Z."/>
            <person name="Higgins J.D."/>
            <person name="Hui J.T."/>
            <person name="Li J."/>
            <person name="Franklin F.C."/>
            <person name="Berger F."/>
        </authorList>
    </citation>
    <scope>SUBCELLULAR LOCATION</scope>
</reference>
<comment type="function">
    <text evidence="2 3 5">Involved in meiotic recombination in association with MSH5. Required for reciprocal recombination and proper segregation of homologous chromosomes at meiosis. Promotes homologous recombination through facilitating chiasma formation during prophase I. Involved in the control of class I crossovers formation.</text>
</comment>
<comment type="subcellular location">
    <subcellularLocation>
        <location evidence="2 4 5 6">Nucleus</location>
    </subcellularLocation>
    <text>In pollen mother cells during meiosis, localizes to unsynapsed axes during leptotene and zygotene, but is not present on synapsed regions of zygotene nuclei.</text>
</comment>
<comment type="tissue specificity">
    <text evidence="2">Specifically expressed in flowers.</text>
</comment>
<comment type="disruption phenotype">
    <text evidence="2">Normal vegetative growth but severe reduction in fertility due to a decrease in chiasma frequency at metaphase I of meiosis.</text>
</comment>
<comment type="similarity">
    <text evidence="7">Belongs to the DNA mismatch repair MutS family.</text>
</comment>
<comment type="sequence caution" evidence="7">
    <conflict type="erroneous gene model prediction">
        <sequence resource="EMBL-CDS" id="CAB10519"/>
    </conflict>
</comment>
<comment type="sequence caution" evidence="7">
    <conflict type="erroneous gene model prediction">
        <sequence resource="EMBL-CDS" id="CAB78741"/>
    </conflict>
</comment>